<comment type="function">
    <text evidence="1">General transcription factor that functions at the core of the DNA-binding multiprotein factor TFIID. Binding of TFIID to the TATA box is the initial transcriptional step of the pre-initiation complex (PIC), playing a role in the activation of eukaryotic genes transcribed by RNA polymerase II. Component of a BRF2-containing transcription factor complex that regulates transcription mediated by RNA polymerase III. Component of the transcription factor SL1/TIF-IB complex, which is involved in the assembly of the PIC (pre-initiation complex) during RNA polymerase I-dependent transcription. The rate of PIC formation probably is primarily dependent on the rate of association of SL1 with the rDNA promoter. SL1 is involved in stabilization of nucleolar transcription factor 1/UBTF on rDNA.</text>
</comment>
<comment type="subunit">
    <text evidence="1 2">Binds DNA as monomer. Belongs to the TFIID complex together with the TBP-associated factors (TAFs). Part of a TFIID-containing RNA polymerase II pre-initiation complex that is composed of TBP and at least GTF2A1, GTF2A2, GTF2E1, GTF2E2, GTF2F1, GTF2H2, GTF2H3, GTF2H4, GTF2H5, GTF2B, TCEA1, ERCC2, ERCC3, TAF1, TAF2, TAF3, TAF4, TAF5, TAF6, TAF7, TAF8, TAF9, TAF10, TAF11, TAF12 and TAF13. Component of the transcription factor SL1/TIF-IB complex, composed of TBP and at least TAF1A, TAF1B, TAF1C and TAF1D. Association of TBP to form either TFIID or SL1/TIF-IB appears to be mutually exclusive. Interacts with TAF1A, TAF1B and TAF1C. Interacts with TFIIB, NCOA6, DRAP1, DR1 and ELF3. Interacts with SPIB, SNAPC1, SNAPC2 and SNAPC4. Interacts with UTF1. Interacts with BRF2; this interaction promotes recruitment of BRF2 to TATA box-containing promoters. Interacts with UBTF. Interacts with GPBP1. Interacts with CITED2. Interacts with ATF7IP. Interacts with LLPH. Interacts with GTF2B (via C-terminus); this interaction with promoter-bound TBP guides RNA polymerase II into the pre-initiation complex (PIC). Interacts with PAX5 (By similarity). Interacts with MSX1; the interaction may inhibit MSX1 autoinactivation (By similarity). Interacts with MSX3 (By similarity).</text>
</comment>
<comment type="subcellular location">
    <subcellularLocation>
        <location evidence="1">Nucleus</location>
    </subcellularLocation>
</comment>
<comment type="similarity">
    <text evidence="4">Belongs to the TBP family.</text>
</comment>
<reference key="1">
    <citation type="submission" date="2006-02" db="EMBL/GenBank/DDBJ databases">
        <authorList>
            <consortium name="NIH - Mammalian Gene Collection (MGC) project"/>
        </authorList>
    </citation>
    <scope>NUCLEOTIDE SEQUENCE [LARGE SCALE MRNA]</scope>
    <source>
        <strain>Hereford</strain>
        <tissue>Uterus</tissue>
    </source>
</reference>
<accession>Q2HJ52</accession>
<feature type="chain" id="PRO_0000268200" description="TATA-box-binding protein">
    <location>
        <begin position="1"/>
        <end position="319"/>
    </location>
</feature>
<feature type="repeat" description="1">
    <location>
        <begin position="145"/>
        <end position="221"/>
    </location>
</feature>
<feature type="repeat" description="2">
    <location>
        <begin position="235"/>
        <end position="312"/>
    </location>
</feature>
<feature type="region of interest" description="Disordered" evidence="3">
    <location>
        <begin position="1"/>
        <end position="21"/>
    </location>
</feature>
<feature type="region of interest" description="Disordered" evidence="3">
    <location>
        <begin position="107"/>
        <end position="139"/>
    </location>
</feature>
<feature type="compositionally biased region" description="Low complexity" evidence="3">
    <location>
        <begin position="107"/>
        <end position="118"/>
    </location>
</feature>
<feature type="compositionally biased region" description="Low complexity" evidence="3">
    <location>
        <begin position="126"/>
        <end position="136"/>
    </location>
</feature>
<feature type="binding site" evidence="1">
    <location>
        <position position="147"/>
    </location>
    <ligand>
        <name>DNA</name>
        <dbReference type="ChEBI" id="CHEBI:16991"/>
    </ligand>
</feature>
<feature type="binding site" evidence="1">
    <location>
        <position position="183"/>
    </location>
    <ligand>
        <name>DNA</name>
        <dbReference type="ChEBI" id="CHEBI:16991"/>
    </ligand>
</feature>
<feature type="binding site" evidence="1">
    <location>
        <position position="198"/>
    </location>
    <ligand>
        <name>DNA</name>
        <dbReference type="ChEBI" id="CHEBI:16991"/>
    </ligand>
</feature>
<feature type="binding site" evidence="1">
    <location>
        <position position="237"/>
    </location>
    <ligand>
        <name>DNA</name>
        <dbReference type="ChEBI" id="CHEBI:16991"/>
    </ligand>
</feature>
<feature type="binding site" evidence="1">
    <location>
        <position position="274"/>
    </location>
    <ligand>
        <name>DNA</name>
        <dbReference type="ChEBI" id="CHEBI:16991"/>
    </ligand>
</feature>
<proteinExistence type="evidence at transcript level"/>
<organism>
    <name type="scientific">Bos taurus</name>
    <name type="common">Bovine</name>
    <dbReference type="NCBI Taxonomy" id="9913"/>
    <lineage>
        <taxon>Eukaryota</taxon>
        <taxon>Metazoa</taxon>
        <taxon>Chordata</taxon>
        <taxon>Craniata</taxon>
        <taxon>Vertebrata</taxon>
        <taxon>Euteleostomi</taxon>
        <taxon>Mammalia</taxon>
        <taxon>Eutheria</taxon>
        <taxon>Laurasiatheria</taxon>
        <taxon>Artiodactyla</taxon>
        <taxon>Ruminantia</taxon>
        <taxon>Pecora</taxon>
        <taxon>Bovidae</taxon>
        <taxon>Bovinae</taxon>
        <taxon>Bos</taxon>
    </lineage>
</organism>
<keyword id="KW-0238">DNA-binding</keyword>
<keyword id="KW-0539">Nucleus</keyword>
<keyword id="KW-1185">Reference proteome</keyword>
<keyword id="KW-0677">Repeat</keyword>
<keyword id="KW-0804">Transcription</keyword>
<evidence type="ECO:0000250" key="1">
    <source>
        <dbReference type="UniProtKB" id="P20226"/>
    </source>
</evidence>
<evidence type="ECO:0000250" key="2">
    <source>
        <dbReference type="UniProtKB" id="P29037"/>
    </source>
</evidence>
<evidence type="ECO:0000256" key="3">
    <source>
        <dbReference type="SAM" id="MobiDB-lite"/>
    </source>
</evidence>
<evidence type="ECO:0000305" key="4"/>
<name>TBP_BOVIN</name>
<dbReference type="EMBL" id="BC113308">
    <property type="protein sequence ID" value="AAI13309.1"/>
    <property type="molecule type" value="mRNA"/>
</dbReference>
<dbReference type="RefSeq" id="NP_001069210.1">
    <property type="nucleotide sequence ID" value="NM_001075742.1"/>
</dbReference>
<dbReference type="RefSeq" id="XP_024852334.1">
    <property type="nucleotide sequence ID" value="XM_024996566.2"/>
</dbReference>
<dbReference type="RefSeq" id="XP_024852335.1">
    <property type="nucleotide sequence ID" value="XM_024996567.2"/>
</dbReference>
<dbReference type="RefSeq" id="XP_059745647.1">
    <property type="nucleotide sequence ID" value="XM_059889664.1"/>
</dbReference>
<dbReference type="RefSeq" id="XP_059745648.1">
    <property type="nucleotide sequence ID" value="XM_059889665.1"/>
</dbReference>
<dbReference type="RefSeq" id="XP_059745649.1">
    <property type="nucleotide sequence ID" value="XM_059889666.1"/>
</dbReference>
<dbReference type="RefSeq" id="XP_059745650.1">
    <property type="nucleotide sequence ID" value="XM_059889667.1"/>
</dbReference>
<dbReference type="SMR" id="Q2HJ52"/>
<dbReference type="FunCoup" id="Q2HJ52">
    <property type="interactions" value="4750"/>
</dbReference>
<dbReference type="STRING" id="9913.ENSBTAP00000038800"/>
<dbReference type="PaxDb" id="9913-ENSBTAP00000024325"/>
<dbReference type="GeneID" id="516578"/>
<dbReference type="KEGG" id="bta:516578"/>
<dbReference type="CTD" id="6908"/>
<dbReference type="VEuPathDB" id="HostDB:ENSBTAG00000007686"/>
<dbReference type="eggNOG" id="KOG3302">
    <property type="taxonomic scope" value="Eukaryota"/>
</dbReference>
<dbReference type="InParanoid" id="Q2HJ52"/>
<dbReference type="OMA" id="NMDQNNS"/>
<dbReference type="OrthoDB" id="2127950at2759"/>
<dbReference type="Reactome" id="R-BTA-5250924">
    <property type="pathway name" value="B-WICH complex positively regulates rRNA expression"/>
</dbReference>
<dbReference type="Reactome" id="R-BTA-674695">
    <property type="pathway name" value="RNA Polymerase II Pre-transcription Events"/>
</dbReference>
<dbReference type="Reactome" id="R-BTA-6804756">
    <property type="pathway name" value="Regulation of TP53 Activity through Phosphorylation"/>
</dbReference>
<dbReference type="Reactome" id="R-BTA-6807505">
    <property type="pathway name" value="RNA polymerase II transcribes snRNA genes"/>
</dbReference>
<dbReference type="Reactome" id="R-BTA-73762">
    <property type="pathway name" value="RNA Polymerase I Transcription Initiation"/>
</dbReference>
<dbReference type="Reactome" id="R-BTA-73772">
    <property type="pathway name" value="RNA Polymerase I Promoter Escape"/>
</dbReference>
<dbReference type="Reactome" id="R-BTA-73776">
    <property type="pathway name" value="RNA Polymerase II Promoter Escape"/>
</dbReference>
<dbReference type="Reactome" id="R-BTA-73779">
    <property type="pathway name" value="RNA Polymerase II Transcription Pre-Initiation And Promoter Opening"/>
</dbReference>
<dbReference type="Reactome" id="R-BTA-73863">
    <property type="pathway name" value="RNA Polymerase I Transcription Termination"/>
</dbReference>
<dbReference type="Reactome" id="R-BTA-75953">
    <property type="pathway name" value="RNA Polymerase II Transcription Initiation"/>
</dbReference>
<dbReference type="Reactome" id="R-BTA-76042">
    <property type="pathway name" value="RNA Polymerase II Transcription Initiation And Promoter Clearance"/>
</dbReference>
<dbReference type="Reactome" id="R-BTA-76061">
    <property type="pathway name" value="RNA Polymerase III Transcription Initiation From Type 1 Promoter"/>
</dbReference>
<dbReference type="Reactome" id="R-BTA-76066">
    <property type="pathway name" value="RNA Polymerase III Transcription Initiation From Type 2 Promoter"/>
</dbReference>
<dbReference type="Reactome" id="R-BTA-76071">
    <property type="pathway name" value="RNA Polymerase III Transcription Initiation From Type 3 Promoter"/>
</dbReference>
<dbReference type="Reactome" id="R-BTA-9018519">
    <property type="pathway name" value="Estrogen-dependent gene expression"/>
</dbReference>
<dbReference type="Proteomes" id="UP000009136">
    <property type="component" value="Chromosome 9"/>
</dbReference>
<dbReference type="Bgee" id="ENSBTAG00000007686">
    <property type="expression patterns" value="Expressed in oocyte and 104 other cell types or tissues"/>
</dbReference>
<dbReference type="GO" id="GO:0005634">
    <property type="term" value="C:nucleus"/>
    <property type="evidence" value="ECO:0000250"/>
    <property type="project" value="UniProtKB"/>
</dbReference>
<dbReference type="GO" id="GO:0005669">
    <property type="term" value="C:transcription factor TFIID complex"/>
    <property type="evidence" value="ECO:0000250"/>
    <property type="project" value="UniProtKB"/>
</dbReference>
<dbReference type="GO" id="GO:0001164">
    <property type="term" value="F:RNA polymerase I core promoter sequence-specific DNA binding"/>
    <property type="evidence" value="ECO:0000250"/>
    <property type="project" value="UniProtKB"/>
</dbReference>
<dbReference type="GO" id="GO:0016251">
    <property type="term" value="F:RNA polymerase II general transcription initiation factor activity"/>
    <property type="evidence" value="ECO:0000318"/>
    <property type="project" value="GO_Central"/>
</dbReference>
<dbReference type="GO" id="GO:0000995">
    <property type="term" value="F:RNA polymerase III general transcription initiation factor activity"/>
    <property type="evidence" value="ECO:0000250"/>
    <property type="project" value="UniProtKB"/>
</dbReference>
<dbReference type="GO" id="GO:0006352">
    <property type="term" value="P:DNA-templated transcription initiation"/>
    <property type="evidence" value="ECO:0000318"/>
    <property type="project" value="GO_Central"/>
</dbReference>
<dbReference type="GO" id="GO:0006366">
    <property type="term" value="P:transcription by RNA polymerase II"/>
    <property type="evidence" value="ECO:0000250"/>
    <property type="project" value="UniProtKB"/>
</dbReference>
<dbReference type="GO" id="GO:0006383">
    <property type="term" value="P:transcription by RNA polymerase III"/>
    <property type="evidence" value="ECO:0000250"/>
    <property type="project" value="UniProtKB"/>
</dbReference>
<dbReference type="CDD" id="cd04516">
    <property type="entry name" value="TBP_eukaryotes"/>
    <property type="match status" value="1"/>
</dbReference>
<dbReference type="FunFam" id="3.30.310.10:FF:000001">
    <property type="entry name" value="TATA-box-binding protein 2"/>
    <property type="match status" value="1"/>
</dbReference>
<dbReference type="FunFam" id="3.30.310.10:FF:000002">
    <property type="entry name" value="TATA-box-binding protein 2"/>
    <property type="match status" value="1"/>
</dbReference>
<dbReference type="Gene3D" id="3.30.310.10">
    <property type="entry name" value="TATA-Binding Protein"/>
    <property type="match status" value="2"/>
</dbReference>
<dbReference type="HAMAP" id="MF_00408">
    <property type="entry name" value="TATA_bind_prot_arch"/>
    <property type="match status" value="1"/>
</dbReference>
<dbReference type="InterPro" id="IPR000814">
    <property type="entry name" value="TBP"/>
</dbReference>
<dbReference type="InterPro" id="IPR030491">
    <property type="entry name" value="TBP_CS"/>
</dbReference>
<dbReference type="InterPro" id="IPR012295">
    <property type="entry name" value="TBP_dom_sf"/>
</dbReference>
<dbReference type="InterPro" id="IPR033710">
    <property type="entry name" value="TBP_eukaryotic"/>
</dbReference>
<dbReference type="PANTHER" id="PTHR10126">
    <property type="entry name" value="TATA-BOX BINDING PROTEIN"/>
    <property type="match status" value="1"/>
</dbReference>
<dbReference type="Pfam" id="PF00352">
    <property type="entry name" value="TBP"/>
    <property type="match status" value="2"/>
</dbReference>
<dbReference type="PRINTS" id="PR00686">
    <property type="entry name" value="TIFACTORIID"/>
</dbReference>
<dbReference type="SUPFAM" id="SSF55945">
    <property type="entry name" value="TATA-box binding protein-like"/>
    <property type="match status" value="2"/>
</dbReference>
<dbReference type="PROSITE" id="PS00351">
    <property type="entry name" value="TFIID"/>
    <property type="match status" value="2"/>
</dbReference>
<sequence>MDQNNSLPPYAQGLASPQGAMTPGIPIFSPMMPYGTGLTPQPIQNTNSLSILEEQQRQQQQQQQQQQQQQQQQQQQAAVAAVQQSTSQQATQGPSGQTPQLFHSQTLTTAPLPGTTPLYPSPMTPMTPITPATPASESSGIVPQLQNIVSTVNLGCKLDLKTIALRARNAEYNPKRFAAVIMRIREPRTTALIFSSGKMVCTGAKSEEQSRLAARKYARVVQKLGFPAKFLDFKIQNMVGSCDVKFPIRLEGLVLTHQQFSSYEPELFPGLIYRMIKPRIVLLIFVSGKVVLTGAKVRAEIYEAFENIYPILKGFRKTT</sequence>
<gene>
    <name type="primary">TBP</name>
</gene>
<protein>
    <recommendedName>
        <fullName>TATA-box-binding protein</fullName>
    </recommendedName>
    <alternativeName>
        <fullName>TATA sequence-binding protein</fullName>
    </alternativeName>
    <alternativeName>
        <fullName>TATA-binding factor</fullName>
    </alternativeName>
    <alternativeName>
        <fullName>TATA-box factor</fullName>
    </alternativeName>
    <alternativeName>
        <fullName>Transcription initiation factor TFIID TBP subunit</fullName>
    </alternativeName>
</protein>